<sequence length="418" mass="48641">MAKLLQSPPRFLPEEWYIANKSQYHRAEAQRSQSERLVAESQRLVEEIEKTTRKSQSDVNKKLEQRLEEVRFWKKELDDKLEQLVNQTDDLLTYKTRLERSLESYKEPLHITEKCLEYREKRVGIDLVHDVVEQELQKEADIIHGVMNLLIRTLEESTEQIRLNRSAKYNLEKDLRDKFTAITIDDVCFSLNNNSPNINFSEKVVRIEPNSVSLEDWLDFSNANVEKADKQLNNSTALKTLVDQILSQTANDLRRQCEVVDEAFINGLKETKDARNKLADHLAKVMEEIASQEKNIMALENAITQQEGPAKVAHTRLETRTHRPNVELCRDIAQYRLIKEIQEINHNVARLKETLAQAQTQLKALYRRQLALQEEIQVKENTIYIDQVLCMEMRKSIPPRDGDDHGAWEGGIRAEAIC</sequence>
<evidence type="ECO:0000250" key="1">
    <source>
        <dbReference type="UniProtKB" id="Q32KZ9"/>
    </source>
</evidence>
<evidence type="ECO:0000255" key="2"/>
<evidence type="ECO:0000269" key="3">
    <source>
    </source>
</evidence>
<evidence type="ECO:0000269" key="4">
    <source>
    </source>
</evidence>
<evidence type="ECO:0000269" key="5">
    <source>
    </source>
</evidence>
<evidence type="ECO:0000269" key="6">
    <source>
    </source>
</evidence>
<evidence type="ECO:0000305" key="7"/>
<evidence type="ECO:0007744" key="8">
    <source>
        <dbReference type="PDB" id="8I7O"/>
    </source>
</evidence>
<evidence type="ECO:0007744" key="9">
    <source>
        <dbReference type="PDB" id="8I7R"/>
    </source>
</evidence>
<evidence type="ECO:0007744" key="10">
    <source>
        <dbReference type="PDB" id="8IYJ"/>
    </source>
</evidence>
<evidence type="ECO:0007744" key="11">
    <source>
        <dbReference type="PDB" id="8TO0"/>
    </source>
</evidence>
<keyword id="KW-0002">3D-structure</keyword>
<keyword id="KW-0966">Cell projection</keyword>
<keyword id="KW-0969">Cilium</keyword>
<keyword id="KW-0175">Coiled coil</keyword>
<keyword id="KW-0963">Cytoplasm</keyword>
<keyword id="KW-0206">Cytoskeleton</keyword>
<keyword id="KW-0282">Flagellum</keyword>
<keyword id="KW-0493">Microtubule</keyword>
<keyword id="KW-1185">Reference proteome</keyword>
<keyword id="KW-0832">Ubl conjugation</keyword>
<dbReference type="EMBL" id="AK005801">
    <property type="protein sequence ID" value="BAB24244.1"/>
    <property type="molecule type" value="mRNA"/>
</dbReference>
<dbReference type="CCDS" id="CCDS36215.1"/>
<dbReference type="RefSeq" id="NP_001268935.1">
    <property type="nucleotide sequence ID" value="NM_001282006.1"/>
</dbReference>
<dbReference type="RefSeq" id="NP_001268936.1">
    <property type="nucleotide sequence ID" value="NM_001282007.1"/>
</dbReference>
<dbReference type="RefSeq" id="NP_035699.2">
    <property type="nucleotide sequence ID" value="NM_011569.3"/>
</dbReference>
<dbReference type="PDB" id="8I7O">
    <property type="method" value="EM"/>
    <property type="resolution" value="4.50 A"/>
    <property type="chains" value="A2/A3=1-418"/>
</dbReference>
<dbReference type="PDB" id="8I7R">
    <property type="method" value="EM"/>
    <property type="resolution" value="6.50 A"/>
    <property type="chains" value="A1/A2/A3/A4=1-418"/>
</dbReference>
<dbReference type="PDB" id="8IYJ">
    <property type="method" value="EM"/>
    <property type="resolution" value="3.50 A"/>
    <property type="chains" value="A0/A1/A2/A3/A4/A5=1-418"/>
</dbReference>
<dbReference type="PDB" id="8TO0">
    <property type="method" value="EM"/>
    <property type="resolution" value="7.70 A"/>
    <property type="chains" value="I/J/K/L/M=1-418"/>
</dbReference>
<dbReference type="PDBsum" id="8I7O"/>
<dbReference type="PDBsum" id="8I7R"/>
<dbReference type="PDBsum" id="8IYJ"/>
<dbReference type="PDBsum" id="8TO0"/>
<dbReference type="EMDB" id="EMD-35229"/>
<dbReference type="EMDB" id="EMD-35230"/>
<dbReference type="EMDB" id="EMD-35823"/>
<dbReference type="EMDB" id="EMD-41431"/>
<dbReference type="SMR" id="Q9DAJ2"/>
<dbReference type="FunCoup" id="Q9DAJ2">
    <property type="interactions" value="80"/>
</dbReference>
<dbReference type="STRING" id="10090.ENSMUSP00000021155"/>
<dbReference type="PhosphoSitePlus" id="Q9DAJ2"/>
<dbReference type="REPRODUCTION-2DPAGE" id="Q9DAJ2"/>
<dbReference type="PaxDb" id="10090-ENSMUSP00000021155"/>
<dbReference type="ProteomicsDB" id="262864"/>
<dbReference type="Antibodypedia" id="23852">
    <property type="antibodies" value="142 antibodies from 25 providers"/>
</dbReference>
<dbReference type="DNASU" id="21689"/>
<dbReference type="Ensembl" id="ENSMUST00000021155.4">
    <property type="protein sequence ID" value="ENSMUSP00000021155.4"/>
    <property type="gene ID" value="ENSMUSG00000020799.17"/>
</dbReference>
<dbReference type="Ensembl" id="ENSMUST00000108502.8">
    <property type="protein sequence ID" value="ENSMUSP00000104142.2"/>
    <property type="gene ID" value="ENSMUSG00000020799.17"/>
</dbReference>
<dbReference type="Ensembl" id="ENSMUST00000108503.9">
    <property type="protein sequence ID" value="ENSMUSP00000104143.3"/>
    <property type="gene ID" value="ENSMUSG00000020799.17"/>
</dbReference>
<dbReference type="GeneID" id="21689"/>
<dbReference type="KEGG" id="mmu:21689"/>
<dbReference type="UCSC" id="uc007jyt.2">
    <property type="organism name" value="mouse"/>
</dbReference>
<dbReference type="AGR" id="MGI:1333819"/>
<dbReference type="CTD" id="83659"/>
<dbReference type="MGI" id="MGI:1333819">
    <property type="gene designation" value="Tekt1"/>
</dbReference>
<dbReference type="VEuPathDB" id="HostDB:ENSMUSG00000020799"/>
<dbReference type="eggNOG" id="KOG2685">
    <property type="taxonomic scope" value="Eukaryota"/>
</dbReference>
<dbReference type="GeneTree" id="ENSGT00950000182894"/>
<dbReference type="HOGENOM" id="CLU_033588_2_2_1"/>
<dbReference type="InParanoid" id="Q9DAJ2"/>
<dbReference type="OMA" id="LAMVMDE"/>
<dbReference type="OrthoDB" id="10054259at2759"/>
<dbReference type="PhylomeDB" id="Q9DAJ2"/>
<dbReference type="TreeFam" id="TF320754"/>
<dbReference type="BioGRID-ORCS" id="21689">
    <property type="hits" value="4 hits in 77 CRISPR screens"/>
</dbReference>
<dbReference type="CD-CODE" id="01CA17F3">
    <property type="entry name" value="Centrosome"/>
</dbReference>
<dbReference type="ChiTaRS" id="Tekt1">
    <property type="organism name" value="mouse"/>
</dbReference>
<dbReference type="PRO" id="PR:Q9DAJ2"/>
<dbReference type="Proteomes" id="UP000000589">
    <property type="component" value="Chromosome 11"/>
</dbReference>
<dbReference type="RNAct" id="Q9DAJ2">
    <property type="molecule type" value="protein"/>
</dbReference>
<dbReference type="Bgee" id="ENSMUSG00000020799">
    <property type="expression patterns" value="Expressed in spermatid and 124 other cell types or tissues"/>
</dbReference>
<dbReference type="ExpressionAtlas" id="Q9DAJ2">
    <property type="expression patterns" value="baseline and differential"/>
</dbReference>
<dbReference type="GO" id="GO:0160111">
    <property type="term" value="C:axonemal A tubule inner sheath"/>
    <property type="evidence" value="ECO:0000314"/>
    <property type="project" value="UniProtKB"/>
</dbReference>
<dbReference type="GO" id="GO:0005879">
    <property type="term" value="C:axonemal microtubule"/>
    <property type="evidence" value="ECO:0000250"/>
    <property type="project" value="UniProtKB"/>
</dbReference>
<dbReference type="GO" id="GO:0015630">
    <property type="term" value="C:microtubule cytoskeleton"/>
    <property type="evidence" value="ECO:0000314"/>
    <property type="project" value="MGI"/>
</dbReference>
<dbReference type="GO" id="GO:0036126">
    <property type="term" value="C:sperm flagellum"/>
    <property type="evidence" value="ECO:0000314"/>
    <property type="project" value="UniProtKB"/>
</dbReference>
<dbReference type="GO" id="GO:0030317">
    <property type="term" value="P:flagellated sperm motility"/>
    <property type="evidence" value="ECO:0000314"/>
    <property type="project" value="UniProtKB"/>
</dbReference>
<dbReference type="InterPro" id="IPR048256">
    <property type="entry name" value="Tektin-like"/>
</dbReference>
<dbReference type="InterPro" id="IPR000435">
    <property type="entry name" value="Tektins"/>
</dbReference>
<dbReference type="PANTHER" id="PTHR19960">
    <property type="entry name" value="TEKTIN"/>
    <property type="match status" value="1"/>
</dbReference>
<dbReference type="PANTHER" id="PTHR19960:SF25">
    <property type="entry name" value="TEKTIN-1"/>
    <property type="match status" value="1"/>
</dbReference>
<dbReference type="Pfam" id="PF03148">
    <property type="entry name" value="Tektin"/>
    <property type="match status" value="1"/>
</dbReference>
<dbReference type="PRINTS" id="PR00511">
    <property type="entry name" value="TEKTIN"/>
</dbReference>
<gene>
    <name type="primary">Tekt1</name>
</gene>
<organism>
    <name type="scientific">Mus musculus</name>
    <name type="common">Mouse</name>
    <dbReference type="NCBI Taxonomy" id="10090"/>
    <lineage>
        <taxon>Eukaryota</taxon>
        <taxon>Metazoa</taxon>
        <taxon>Chordata</taxon>
        <taxon>Craniata</taxon>
        <taxon>Vertebrata</taxon>
        <taxon>Euteleostomi</taxon>
        <taxon>Mammalia</taxon>
        <taxon>Eutheria</taxon>
        <taxon>Euarchontoglires</taxon>
        <taxon>Glires</taxon>
        <taxon>Rodentia</taxon>
        <taxon>Myomorpha</taxon>
        <taxon>Muroidea</taxon>
        <taxon>Muridae</taxon>
        <taxon>Murinae</taxon>
        <taxon>Mus</taxon>
        <taxon>Mus</taxon>
    </lineage>
</organism>
<name>TEKT1_MOUSE</name>
<proteinExistence type="evidence at protein level"/>
<comment type="function">
    <text evidence="4 5 6">Microtubule inner protein (MIP) part of the dynein-decorated doublet microtubules (DMTs) in cilia and flagellar axoneme (PubMed:37295417, PubMed:37865089, PubMed:37989994). Forms filamentous polymers in the walls of ciliary and flagellar microtubules (PubMed:37295417).</text>
</comment>
<comment type="subunit">
    <text evidence="4 5 6">Microtubule inner protein component of sperm flagellar doublet microtubules.</text>
</comment>
<comment type="subcellular location">
    <subcellularLocation>
        <location evidence="1">Cytoplasm</location>
        <location evidence="1">Cytoskeleton</location>
        <location evidence="1">Cilium axoneme</location>
    </subcellularLocation>
    <subcellularLocation>
        <location evidence="4 5 6">Cytoplasm</location>
        <location evidence="4 5 6">Cytoskeleton</location>
        <location evidence="4 5 6">Flagellum axoneme</location>
    </subcellularLocation>
</comment>
<comment type="PTM">
    <text evidence="3">Ubiquitinated, leading to its degradation. Deubiquitinated by USP16, promoting its stability.</text>
</comment>
<comment type="similarity">
    <text evidence="7">Belongs to the tektin family.</text>
</comment>
<reference key="1">
    <citation type="journal article" date="2005" name="Science">
        <title>The transcriptional landscape of the mammalian genome.</title>
        <authorList>
            <person name="Carninci P."/>
            <person name="Kasukawa T."/>
            <person name="Katayama S."/>
            <person name="Gough J."/>
            <person name="Frith M.C."/>
            <person name="Maeda N."/>
            <person name="Oyama R."/>
            <person name="Ravasi T."/>
            <person name="Lenhard B."/>
            <person name="Wells C."/>
            <person name="Kodzius R."/>
            <person name="Shimokawa K."/>
            <person name="Bajic V.B."/>
            <person name="Brenner S.E."/>
            <person name="Batalov S."/>
            <person name="Forrest A.R."/>
            <person name="Zavolan M."/>
            <person name="Davis M.J."/>
            <person name="Wilming L.G."/>
            <person name="Aidinis V."/>
            <person name="Allen J.E."/>
            <person name="Ambesi-Impiombato A."/>
            <person name="Apweiler R."/>
            <person name="Aturaliya R.N."/>
            <person name="Bailey T.L."/>
            <person name="Bansal M."/>
            <person name="Baxter L."/>
            <person name="Beisel K.W."/>
            <person name="Bersano T."/>
            <person name="Bono H."/>
            <person name="Chalk A.M."/>
            <person name="Chiu K.P."/>
            <person name="Choudhary V."/>
            <person name="Christoffels A."/>
            <person name="Clutterbuck D.R."/>
            <person name="Crowe M.L."/>
            <person name="Dalla E."/>
            <person name="Dalrymple B.P."/>
            <person name="de Bono B."/>
            <person name="Della Gatta G."/>
            <person name="di Bernardo D."/>
            <person name="Down T."/>
            <person name="Engstrom P."/>
            <person name="Fagiolini M."/>
            <person name="Faulkner G."/>
            <person name="Fletcher C.F."/>
            <person name="Fukushima T."/>
            <person name="Furuno M."/>
            <person name="Futaki S."/>
            <person name="Gariboldi M."/>
            <person name="Georgii-Hemming P."/>
            <person name="Gingeras T.R."/>
            <person name="Gojobori T."/>
            <person name="Green R.E."/>
            <person name="Gustincich S."/>
            <person name="Harbers M."/>
            <person name="Hayashi Y."/>
            <person name="Hensch T.K."/>
            <person name="Hirokawa N."/>
            <person name="Hill D."/>
            <person name="Huminiecki L."/>
            <person name="Iacono M."/>
            <person name="Ikeo K."/>
            <person name="Iwama A."/>
            <person name="Ishikawa T."/>
            <person name="Jakt M."/>
            <person name="Kanapin A."/>
            <person name="Katoh M."/>
            <person name="Kawasawa Y."/>
            <person name="Kelso J."/>
            <person name="Kitamura H."/>
            <person name="Kitano H."/>
            <person name="Kollias G."/>
            <person name="Krishnan S.P."/>
            <person name="Kruger A."/>
            <person name="Kummerfeld S.K."/>
            <person name="Kurochkin I.V."/>
            <person name="Lareau L.F."/>
            <person name="Lazarevic D."/>
            <person name="Lipovich L."/>
            <person name="Liu J."/>
            <person name="Liuni S."/>
            <person name="McWilliam S."/>
            <person name="Madan Babu M."/>
            <person name="Madera M."/>
            <person name="Marchionni L."/>
            <person name="Matsuda H."/>
            <person name="Matsuzawa S."/>
            <person name="Miki H."/>
            <person name="Mignone F."/>
            <person name="Miyake S."/>
            <person name="Morris K."/>
            <person name="Mottagui-Tabar S."/>
            <person name="Mulder N."/>
            <person name="Nakano N."/>
            <person name="Nakauchi H."/>
            <person name="Ng P."/>
            <person name="Nilsson R."/>
            <person name="Nishiguchi S."/>
            <person name="Nishikawa S."/>
            <person name="Nori F."/>
            <person name="Ohara O."/>
            <person name="Okazaki Y."/>
            <person name="Orlando V."/>
            <person name="Pang K.C."/>
            <person name="Pavan W.J."/>
            <person name="Pavesi G."/>
            <person name="Pesole G."/>
            <person name="Petrovsky N."/>
            <person name="Piazza S."/>
            <person name="Reed J."/>
            <person name="Reid J.F."/>
            <person name="Ring B.Z."/>
            <person name="Ringwald M."/>
            <person name="Rost B."/>
            <person name="Ruan Y."/>
            <person name="Salzberg S.L."/>
            <person name="Sandelin A."/>
            <person name="Schneider C."/>
            <person name="Schoenbach C."/>
            <person name="Sekiguchi K."/>
            <person name="Semple C.A."/>
            <person name="Seno S."/>
            <person name="Sessa L."/>
            <person name="Sheng Y."/>
            <person name="Shibata Y."/>
            <person name="Shimada H."/>
            <person name="Shimada K."/>
            <person name="Silva D."/>
            <person name="Sinclair B."/>
            <person name="Sperling S."/>
            <person name="Stupka E."/>
            <person name="Sugiura K."/>
            <person name="Sultana R."/>
            <person name="Takenaka Y."/>
            <person name="Taki K."/>
            <person name="Tammoja K."/>
            <person name="Tan S.L."/>
            <person name="Tang S."/>
            <person name="Taylor M.S."/>
            <person name="Tegner J."/>
            <person name="Teichmann S.A."/>
            <person name="Ueda H.R."/>
            <person name="van Nimwegen E."/>
            <person name="Verardo R."/>
            <person name="Wei C.L."/>
            <person name="Yagi K."/>
            <person name="Yamanishi H."/>
            <person name="Zabarovsky E."/>
            <person name="Zhu S."/>
            <person name="Zimmer A."/>
            <person name="Hide W."/>
            <person name="Bult C."/>
            <person name="Grimmond S.M."/>
            <person name="Teasdale R.D."/>
            <person name="Liu E.T."/>
            <person name="Brusic V."/>
            <person name="Quackenbush J."/>
            <person name="Wahlestedt C."/>
            <person name="Mattick J.S."/>
            <person name="Hume D.A."/>
            <person name="Kai C."/>
            <person name="Sasaki D."/>
            <person name="Tomaru Y."/>
            <person name="Fukuda S."/>
            <person name="Kanamori-Katayama M."/>
            <person name="Suzuki M."/>
            <person name="Aoki J."/>
            <person name="Arakawa T."/>
            <person name="Iida J."/>
            <person name="Imamura K."/>
            <person name="Itoh M."/>
            <person name="Kato T."/>
            <person name="Kawaji H."/>
            <person name="Kawagashira N."/>
            <person name="Kawashima T."/>
            <person name="Kojima M."/>
            <person name="Kondo S."/>
            <person name="Konno H."/>
            <person name="Nakano K."/>
            <person name="Ninomiya N."/>
            <person name="Nishio T."/>
            <person name="Okada M."/>
            <person name="Plessy C."/>
            <person name="Shibata K."/>
            <person name="Shiraki T."/>
            <person name="Suzuki S."/>
            <person name="Tagami M."/>
            <person name="Waki K."/>
            <person name="Watahiki A."/>
            <person name="Okamura-Oho Y."/>
            <person name="Suzuki H."/>
            <person name="Kawai J."/>
            <person name="Hayashizaki Y."/>
        </authorList>
    </citation>
    <scope>NUCLEOTIDE SEQUENCE [LARGE SCALE MRNA]</scope>
    <source>
        <strain>C57BL/6J</strain>
        <tissue>Testis</tissue>
    </source>
</reference>
<reference key="2">
    <citation type="journal article" date="2010" name="Cell">
        <title>A tissue-specific atlas of mouse protein phosphorylation and expression.</title>
        <authorList>
            <person name="Huttlin E.L."/>
            <person name="Jedrychowski M.P."/>
            <person name="Elias J.E."/>
            <person name="Goswami T."/>
            <person name="Rad R."/>
            <person name="Beausoleil S.A."/>
            <person name="Villen J."/>
            <person name="Haas W."/>
            <person name="Sowa M.E."/>
            <person name="Gygi S.P."/>
        </authorList>
    </citation>
    <scope>IDENTIFICATION BY MASS SPECTROMETRY [LARGE SCALE ANALYSIS]</scope>
    <source>
        <tissue>Testis</tissue>
    </source>
</reference>
<reference key="3">
    <citation type="journal article" date="2022" name="Sci. Adv.">
        <title>Loss-of-function mutations in CEP78 cause male infertility in humans and mice.</title>
        <authorList>
            <person name="Zhang X."/>
            <person name="Zheng R."/>
            <person name="Liang C."/>
            <person name="Liu H."/>
            <person name="Zhang X."/>
            <person name="Ma Y."/>
            <person name="Liu M."/>
            <person name="Zhang W."/>
            <person name="Yang Y."/>
            <person name="Liu M."/>
            <person name="Jiang C."/>
            <person name="Ren Q."/>
            <person name="Wang Y."/>
            <person name="Chen S."/>
            <person name="Yang Y."/>
            <person name="Shen Y."/>
        </authorList>
    </citation>
    <scope>UBIQUITINATION</scope>
    <scope>DEUBIQUITINATION</scope>
</reference>
<reference evidence="10" key="4">
    <citation type="journal article" date="2023" name="Cell">
        <title>Structures of sperm flagellar doublet microtubules expand the genetic spectrum of male infertility.</title>
        <authorList>
            <person name="Zhou L."/>
            <person name="Liu H."/>
            <person name="Liu S."/>
            <person name="Yang X."/>
            <person name="Dong Y."/>
            <person name="Pan Y."/>
            <person name="Xiao Z."/>
            <person name="Zheng B."/>
            <person name="Sun Y."/>
            <person name="Huang P."/>
            <person name="Zhang X."/>
            <person name="Hu J."/>
            <person name="Sun R."/>
            <person name="Feng S."/>
            <person name="Zhu Y."/>
            <person name="Liu M."/>
            <person name="Gui M."/>
            <person name="Wu J."/>
        </authorList>
    </citation>
    <scope>STRUCTURE BY ELECTRON MICROSCOPY (3.50 ANGSTROMS) OF SPERM FLAGELLAR DOUBLET MICROTUBULES</scope>
    <scope>FUNCTION</scope>
    <scope>SUBCELLULAR LOCATION</scope>
    <scope>SUBUNIT</scope>
</reference>
<reference evidence="11" key="5">
    <citation type="journal article" date="2023" name="Cell">
        <title>De novo protein identification in mammalian sperm using in situ cryoelectron tomography and AlphaFold2 docking.</title>
        <authorList>
            <person name="Chen Z."/>
            <person name="Shiozaki M."/>
            <person name="Haas K.M."/>
            <person name="Skinner W.M."/>
            <person name="Zhao S."/>
            <person name="Guo C."/>
            <person name="Polacco B.J."/>
            <person name="Yu Z."/>
            <person name="Krogan N.J."/>
            <person name="Lishko P.V."/>
            <person name="Kaake R.M."/>
            <person name="Vale R.D."/>
            <person name="Agard D.A."/>
        </authorList>
    </citation>
    <scope>STRUCTURE BY ELECTRON MICROSCOPY (7.70 ANGSTROMS) OF SPERM FLAGELLAR DOUBLET MICROTUBULES</scope>
    <scope>FUNCTION</scope>
    <scope>SUBCELLULAR LOCATION</scope>
    <scope>SUBUNIT</scope>
</reference>
<reference evidence="8 9" key="6">
    <citation type="journal article" date="2023" name="Cell Discov.">
        <title>In-cell structural insight into the stability of sperm microtubule doublet.</title>
        <authorList>
            <person name="Tai L."/>
            <person name="Yin G."/>
            <person name="Huang X."/>
            <person name="Sun F."/>
            <person name="Zhu Y."/>
        </authorList>
    </citation>
    <scope>STRUCTURE BY ELECTRON MICROSCOPY (4.50 ANGSTROMS)</scope>
    <scope>FUNCTION</scope>
    <scope>SUBUNIT</scope>
    <scope>SUBCELLULAR LOCATION</scope>
</reference>
<protein>
    <recommendedName>
        <fullName>Tektin-1</fullName>
    </recommendedName>
</protein>
<accession>Q9DAJ2</accession>
<feature type="chain" id="PRO_0000184563" description="Tektin-1">
    <location>
        <begin position="1"/>
        <end position="418"/>
    </location>
</feature>
<feature type="coiled-coil region" evidence="2">
    <location>
        <begin position="20"/>
        <end position="107"/>
    </location>
</feature>
<feature type="coiled-coil region" evidence="2">
    <location>
        <begin position="134"/>
        <end position="177"/>
    </location>
</feature>
<feature type="coiled-coil region" evidence="2">
    <location>
        <begin position="266"/>
        <end position="308"/>
    </location>
</feature>
<feature type="coiled-coil region" evidence="2">
    <location>
        <begin position="332"/>
        <end position="383"/>
    </location>
</feature>